<feature type="chain" id="PRO_0000428273" description="Ribonuclease HII">
    <location>
        <begin position="1"/>
        <end position="264"/>
    </location>
</feature>
<feature type="domain" description="RNase H type-2" evidence="2">
    <location>
        <begin position="33"/>
        <end position="224"/>
    </location>
</feature>
<feature type="region of interest" description="Disordered" evidence="3">
    <location>
        <begin position="222"/>
        <end position="264"/>
    </location>
</feature>
<feature type="binding site" evidence="1">
    <location>
        <position position="39"/>
    </location>
    <ligand>
        <name>a divalent metal cation</name>
        <dbReference type="ChEBI" id="CHEBI:60240"/>
    </ligand>
</feature>
<feature type="binding site" evidence="1">
    <location>
        <position position="40"/>
    </location>
    <ligand>
        <name>a divalent metal cation</name>
        <dbReference type="ChEBI" id="CHEBI:60240"/>
    </ligand>
</feature>
<feature type="binding site" evidence="1">
    <location>
        <position position="133"/>
    </location>
    <ligand>
        <name>a divalent metal cation</name>
        <dbReference type="ChEBI" id="CHEBI:60240"/>
    </ligand>
</feature>
<gene>
    <name type="primary">rnhB</name>
    <name type="ordered locus">MT2970</name>
</gene>
<sequence length="264" mass="27646">MTKTWPPRTVIRKSGGLRGMRTLESALHRGGLGPVAGVDEVGRGACAGPLVVAACVLGPGRIASLAALDDSKKLSEQAREKLFPLICRYAVAYHVVFIPSAEVDRRGVHVANIEGMRRAVAGLAVRPGYVLSDGFRVPGLPMPSLPVIGGDAAAACIAAASVLAKVSRDRVMVALDADHPGYGFAEHKGYSTPAHSRALARLGPCPQHRYSFINVRRVASGSNTAEVADGQPDPRDGTAQTGEGRWSKSSHPATMRATGRAQGT</sequence>
<comment type="function">
    <text evidence="1">Endonuclease that specifically degrades the RNA of RNA-DNA hybrids.</text>
</comment>
<comment type="catalytic activity">
    <reaction>
        <text>Endonucleolytic cleavage to 5'-phosphomonoester.</text>
        <dbReference type="EC" id="3.1.26.4"/>
    </reaction>
</comment>
<comment type="cofactor">
    <cofactor evidence="1">
        <name>Mn(2+)</name>
        <dbReference type="ChEBI" id="CHEBI:29035"/>
    </cofactor>
    <cofactor evidence="1">
        <name>Mg(2+)</name>
        <dbReference type="ChEBI" id="CHEBI:18420"/>
    </cofactor>
    <text evidence="1">Manganese or magnesium. Binds 1 divalent metal ion per monomer in the absence of substrate. May bind a second metal ion after substrate binding.</text>
</comment>
<comment type="subcellular location">
    <subcellularLocation>
        <location evidence="4">Cytoplasm</location>
    </subcellularLocation>
</comment>
<comment type="similarity">
    <text evidence="4">Belongs to the RNase HII family.</text>
</comment>
<proteinExistence type="inferred from homology"/>
<accession>P9WH00</accession>
<accession>L0TCK5</accession>
<accession>Q10793</accession>
<keyword id="KW-0963">Cytoplasm</keyword>
<keyword id="KW-0255">Endonuclease</keyword>
<keyword id="KW-0378">Hydrolase</keyword>
<keyword id="KW-0464">Manganese</keyword>
<keyword id="KW-0479">Metal-binding</keyword>
<keyword id="KW-0540">Nuclease</keyword>
<keyword id="KW-1185">Reference proteome</keyword>
<evidence type="ECO:0000250" key="1"/>
<evidence type="ECO:0000255" key="2">
    <source>
        <dbReference type="PROSITE-ProRule" id="PRU01319"/>
    </source>
</evidence>
<evidence type="ECO:0000256" key="3">
    <source>
        <dbReference type="SAM" id="MobiDB-lite"/>
    </source>
</evidence>
<evidence type="ECO:0000305" key="4"/>
<reference key="1">
    <citation type="journal article" date="2002" name="J. Bacteriol.">
        <title>Whole-genome comparison of Mycobacterium tuberculosis clinical and laboratory strains.</title>
        <authorList>
            <person name="Fleischmann R.D."/>
            <person name="Alland D."/>
            <person name="Eisen J.A."/>
            <person name="Carpenter L."/>
            <person name="White O."/>
            <person name="Peterson J.D."/>
            <person name="DeBoy R.T."/>
            <person name="Dodson R.J."/>
            <person name="Gwinn M.L."/>
            <person name="Haft D.H."/>
            <person name="Hickey E.K."/>
            <person name="Kolonay J.F."/>
            <person name="Nelson W.C."/>
            <person name="Umayam L.A."/>
            <person name="Ermolaeva M.D."/>
            <person name="Salzberg S.L."/>
            <person name="Delcher A."/>
            <person name="Utterback T.R."/>
            <person name="Weidman J.F."/>
            <person name="Khouri H.M."/>
            <person name="Gill J."/>
            <person name="Mikula A."/>
            <person name="Bishai W."/>
            <person name="Jacobs W.R. Jr."/>
            <person name="Venter J.C."/>
            <person name="Fraser C.M."/>
        </authorList>
    </citation>
    <scope>NUCLEOTIDE SEQUENCE [LARGE SCALE GENOMIC DNA]</scope>
    <source>
        <strain>CDC 1551 / Oshkosh</strain>
    </source>
</reference>
<protein>
    <recommendedName>
        <fullName>Ribonuclease HII</fullName>
        <shortName>RNase HII</shortName>
        <ecNumber>3.1.26.4</ecNumber>
    </recommendedName>
</protein>
<dbReference type="EC" id="3.1.26.4"/>
<dbReference type="EMBL" id="AE000516">
    <property type="protein sequence ID" value="AAK47296.1"/>
    <property type="molecule type" value="Genomic_DNA"/>
</dbReference>
<dbReference type="PIR" id="A70927">
    <property type="entry name" value="A70927"/>
</dbReference>
<dbReference type="RefSeq" id="WP_003414713.1">
    <property type="nucleotide sequence ID" value="NZ_KK341227.1"/>
</dbReference>
<dbReference type="SMR" id="P9WH00"/>
<dbReference type="KEGG" id="mtc:MT2970"/>
<dbReference type="PATRIC" id="fig|83331.31.peg.3210"/>
<dbReference type="HOGENOM" id="CLU_036532_1_0_11"/>
<dbReference type="Proteomes" id="UP000001020">
    <property type="component" value="Chromosome"/>
</dbReference>
<dbReference type="GO" id="GO:0005737">
    <property type="term" value="C:cytoplasm"/>
    <property type="evidence" value="ECO:0007669"/>
    <property type="project" value="UniProtKB-SubCell"/>
</dbReference>
<dbReference type="GO" id="GO:0032299">
    <property type="term" value="C:ribonuclease H2 complex"/>
    <property type="evidence" value="ECO:0007669"/>
    <property type="project" value="TreeGrafter"/>
</dbReference>
<dbReference type="GO" id="GO:0030145">
    <property type="term" value="F:manganese ion binding"/>
    <property type="evidence" value="ECO:0007669"/>
    <property type="project" value="UniProtKB-UniRule"/>
</dbReference>
<dbReference type="GO" id="GO:0003723">
    <property type="term" value="F:RNA binding"/>
    <property type="evidence" value="ECO:0007669"/>
    <property type="project" value="InterPro"/>
</dbReference>
<dbReference type="GO" id="GO:0004523">
    <property type="term" value="F:RNA-DNA hybrid ribonuclease activity"/>
    <property type="evidence" value="ECO:0007669"/>
    <property type="project" value="UniProtKB-UniRule"/>
</dbReference>
<dbReference type="GO" id="GO:0043137">
    <property type="term" value="P:DNA replication, removal of RNA primer"/>
    <property type="evidence" value="ECO:0007669"/>
    <property type="project" value="TreeGrafter"/>
</dbReference>
<dbReference type="GO" id="GO:0006298">
    <property type="term" value="P:mismatch repair"/>
    <property type="evidence" value="ECO:0007669"/>
    <property type="project" value="TreeGrafter"/>
</dbReference>
<dbReference type="CDD" id="cd07182">
    <property type="entry name" value="RNase_HII_bacteria_HII_like"/>
    <property type="match status" value="1"/>
</dbReference>
<dbReference type="FunFam" id="3.30.420.10:FF:000113">
    <property type="entry name" value="Ribonuclease HII"/>
    <property type="match status" value="1"/>
</dbReference>
<dbReference type="Gene3D" id="3.30.420.10">
    <property type="entry name" value="Ribonuclease H-like superfamily/Ribonuclease H"/>
    <property type="match status" value="1"/>
</dbReference>
<dbReference type="HAMAP" id="MF_00052_B">
    <property type="entry name" value="RNase_HII_B"/>
    <property type="match status" value="1"/>
</dbReference>
<dbReference type="InterPro" id="IPR022898">
    <property type="entry name" value="RNase_HII"/>
</dbReference>
<dbReference type="InterPro" id="IPR001352">
    <property type="entry name" value="RNase_HII/HIII"/>
</dbReference>
<dbReference type="InterPro" id="IPR024567">
    <property type="entry name" value="RNase_HII/HIII_dom"/>
</dbReference>
<dbReference type="InterPro" id="IPR012337">
    <property type="entry name" value="RNaseH-like_sf"/>
</dbReference>
<dbReference type="InterPro" id="IPR036397">
    <property type="entry name" value="RNaseH_sf"/>
</dbReference>
<dbReference type="NCBIfam" id="NF000595">
    <property type="entry name" value="PRK00015.1-3"/>
    <property type="match status" value="1"/>
</dbReference>
<dbReference type="NCBIfam" id="NF000598">
    <property type="entry name" value="PRK00015.2-2"/>
    <property type="match status" value="1"/>
</dbReference>
<dbReference type="NCBIfam" id="NF000600">
    <property type="entry name" value="PRK00015.2-4"/>
    <property type="match status" value="1"/>
</dbReference>
<dbReference type="PANTHER" id="PTHR10954">
    <property type="entry name" value="RIBONUCLEASE H2 SUBUNIT A"/>
    <property type="match status" value="1"/>
</dbReference>
<dbReference type="PANTHER" id="PTHR10954:SF18">
    <property type="entry name" value="RIBONUCLEASE HII"/>
    <property type="match status" value="1"/>
</dbReference>
<dbReference type="Pfam" id="PF01351">
    <property type="entry name" value="RNase_HII"/>
    <property type="match status" value="1"/>
</dbReference>
<dbReference type="SUPFAM" id="SSF53098">
    <property type="entry name" value="Ribonuclease H-like"/>
    <property type="match status" value="1"/>
</dbReference>
<dbReference type="PROSITE" id="PS51975">
    <property type="entry name" value="RNASE_H_2"/>
    <property type="match status" value="1"/>
</dbReference>
<name>RNH2_MYCTO</name>
<organism>
    <name type="scientific">Mycobacterium tuberculosis (strain CDC 1551 / Oshkosh)</name>
    <dbReference type="NCBI Taxonomy" id="83331"/>
    <lineage>
        <taxon>Bacteria</taxon>
        <taxon>Bacillati</taxon>
        <taxon>Actinomycetota</taxon>
        <taxon>Actinomycetes</taxon>
        <taxon>Mycobacteriales</taxon>
        <taxon>Mycobacteriaceae</taxon>
        <taxon>Mycobacterium</taxon>
        <taxon>Mycobacterium tuberculosis complex</taxon>
    </lineage>
</organism>